<organism>
    <name type="scientific">Yersinia pseudotuberculosis serotype I (strain IP32953)</name>
    <dbReference type="NCBI Taxonomy" id="273123"/>
    <lineage>
        <taxon>Bacteria</taxon>
        <taxon>Pseudomonadati</taxon>
        <taxon>Pseudomonadota</taxon>
        <taxon>Gammaproteobacteria</taxon>
        <taxon>Enterobacterales</taxon>
        <taxon>Yersiniaceae</taxon>
        <taxon>Yersinia</taxon>
    </lineage>
</organism>
<comment type="function">
    <text evidence="2">Quinone reductase that provides resistance to thiol-specific stress caused by electrophilic quinones.</text>
</comment>
<comment type="function">
    <text evidence="2">Also exhibits azoreductase activity. Catalyzes the reductive cleavage of the azo bond in aromatic azo compounds to the corresponding amines.</text>
</comment>
<comment type="catalytic activity">
    <reaction evidence="2">
        <text>2 a quinone + NADH + H(+) = 2 a 1,4-benzosemiquinone + NAD(+)</text>
        <dbReference type="Rhea" id="RHEA:65952"/>
        <dbReference type="ChEBI" id="CHEBI:15378"/>
        <dbReference type="ChEBI" id="CHEBI:57540"/>
        <dbReference type="ChEBI" id="CHEBI:57945"/>
        <dbReference type="ChEBI" id="CHEBI:132124"/>
        <dbReference type="ChEBI" id="CHEBI:134225"/>
    </reaction>
</comment>
<comment type="catalytic activity">
    <reaction evidence="2">
        <text>N,N-dimethyl-1,4-phenylenediamine + anthranilate + 2 NAD(+) = 2-(4-dimethylaminophenyl)diazenylbenzoate + 2 NADH + 2 H(+)</text>
        <dbReference type="Rhea" id="RHEA:55872"/>
        <dbReference type="ChEBI" id="CHEBI:15378"/>
        <dbReference type="ChEBI" id="CHEBI:15783"/>
        <dbReference type="ChEBI" id="CHEBI:16567"/>
        <dbReference type="ChEBI" id="CHEBI:57540"/>
        <dbReference type="ChEBI" id="CHEBI:57945"/>
        <dbReference type="ChEBI" id="CHEBI:71579"/>
        <dbReference type="EC" id="1.7.1.17"/>
    </reaction>
</comment>
<comment type="cofactor">
    <cofactor evidence="2">
        <name>FMN</name>
        <dbReference type="ChEBI" id="CHEBI:58210"/>
    </cofactor>
    <text evidence="2">Binds 1 FMN per subunit.</text>
</comment>
<comment type="subunit">
    <text evidence="2">Homodimer.</text>
</comment>
<comment type="similarity">
    <text evidence="2">Belongs to the azoreductase type 1 family.</text>
</comment>
<reference key="1">
    <citation type="journal article" date="2004" name="Proc. Natl. Acad. Sci. U.S.A.">
        <title>Insights into the evolution of Yersinia pestis through whole-genome comparison with Yersinia pseudotuberculosis.</title>
        <authorList>
            <person name="Chain P.S.G."/>
            <person name="Carniel E."/>
            <person name="Larimer F.W."/>
            <person name="Lamerdin J."/>
            <person name="Stoutland P.O."/>
            <person name="Regala W.M."/>
            <person name="Georgescu A.M."/>
            <person name="Vergez L.M."/>
            <person name="Land M.L."/>
            <person name="Motin V.L."/>
            <person name="Brubaker R.R."/>
            <person name="Fowler J."/>
            <person name="Hinnebusch J."/>
            <person name="Marceau M."/>
            <person name="Medigue C."/>
            <person name="Simonet M."/>
            <person name="Chenal-Francisque V."/>
            <person name="Souza B."/>
            <person name="Dacheux D."/>
            <person name="Elliott J.M."/>
            <person name="Derbise A."/>
            <person name="Hauser L.J."/>
            <person name="Garcia E."/>
        </authorList>
    </citation>
    <scope>NUCLEOTIDE SEQUENCE [LARGE SCALE GENOMIC DNA]</scope>
    <source>
        <strain>IP32953</strain>
    </source>
</reference>
<name>AZOR_YERPS</name>
<sequence length="201" mass="21600">MSKVLVLKSSILATSSQSNQLADFFVEQWQAAHAGDQITVRDLAAQPIPVLDGELVGALRPSGTALTPRQQEALALSDELIAELQANDVIVIAAPMYNFNIPTQLKNYFDMIARAGVTFRYTEKGPEGLVTGKRAIILTSRGGIHKDTPTDLVVPYLRLFLGFIGITDVEFVFAEGIAYGPEVATKAQADAKTLLAQVVAA</sequence>
<keyword id="KW-0285">Flavoprotein</keyword>
<keyword id="KW-0288">FMN</keyword>
<keyword id="KW-0520">NAD</keyword>
<keyword id="KW-0560">Oxidoreductase</keyword>
<dbReference type="EC" id="1.6.5.-" evidence="2"/>
<dbReference type="EC" id="1.7.1.17" evidence="2"/>
<dbReference type="EMBL" id="BX936398">
    <property type="protein sequence ID" value="CAH21480.1"/>
    <property type="molecule type" value="Genomic_DNA"/>
</dbReference>
<dbReference type="RefSeq" id="WP_002211004.1">
    <property type="nucleotide sequence ID" value="NZ_CP009712.1"/>
</dbReference>
<dbReference type="SMR" id="Q66A90"/>
<dbReference type="GeneID" id="57976351"/>
<dbReference type="KEGG" id="ypo:BZ17_220"/>
<dbReference type="KEGG" id="yps:YPTB2242"/>
<dbReference type="PATRIC" id="fig|273123.14.peg.227"/>
<dbReference type="Proteomes" id="UP000001011">
    <property type="component" value="Chromosome"/>
</dbReference>
<dbReference type="GO" id="GO:0009055">
    <property type="term" value="F:electron transfer activity"/>
    <property type="evidence" value="ECO:0007669"/>
    <property type="project" value="UniProtKB-UniRule"/>
</dbReference>
<dbReference type="GO" id="GO:0010181">
    <property type="term" value="F:FMN binding"/>
    <property type="evidence" value="ECO:0007669"/>
    <property type="project" value="UniProtKB-UniRule"/>
</dbReference>
<dbReference type="GO" id="GO:0016652">
    <property type="term" value="F:oxidoreductase activity, acting on NAD(P)H as acceptor"/>
    <property type="evidence" value="ECO:0007669"/>
    <property type="project" value="UniProtKB-UniRule"/>
</dbReference>
<dbReference type="GO" id="GO:0016655">
    <property type="term" value="F:oxidoreductase activity, acting on NAD(P)H, quinone or similar compound as acceptor"/>
    <property type="evidence" value="ECO:0007669"/>
    <property type="project" value="InterPro"/>
</dbReference>
<dbReference type="FunFam" id="3.40.50.360:FF:000010">
    <property type="entry name" value="FMN-dependent NADH-azoreductase"/>
    <property type="match status" value="1"/>
</dbReference>
<dbReference type="Gene3D" id="3.40.50.360">
    <property type="match status" value="1"/>
</dbReference>
<dbReference type="HAMAP" id="MF_01216">
    <property type="entry name" value="Azoreductase_type1"/>
    <property type="match status" value="1"/>
</dbReference>
<dbReference type="InterPro" id="IPR003680">
    <property type="entry name" value="Flavodoxin_fold"/>
</dbReference>
<dbReference type="InterPro" id="IPR029039">
    <property type="entry name" value="Flavoprotein-like_sf"/>
</dbReference>
<dbReference type="InterPro" id="IPR050104">
    <property type="entry name" value="FMN-dep_NADH:Q_OxRdtase_AzoR1"/>
</dbReference>
<dbReference type="InterPro" id="IPR023048">
    <property type="entry name" value="NADH:quinone_OxRdtase_FMN_depd"/>
</dbReference>
<dbReference type="PANTHER" id="PTHR43741">
    <property type="entry name" value="FMN-DEPENDENT NADH-AZOREDUCTASE 1"/>
    <property type="match status" value="1"/>
</dbReference>
<dbReference type="PANTHER" id="PTHR43741:SF2">
    <property type="entry name" value="FMN-DEPENDENT NADH:QUINONE OXIDOREDUCTASE"/>
    <property type="match status" value="1"/>
</dbReference>
<dbReference type="Pfam" id="PF02525">
    <property type="entry name" value="Flavodoxin_2"/>
    <property type="match status" value="1"/>
</dbReference>
<dbReference type="SUPFAM" id="SSF52218">
    <property type="entry name" value="Flavoproteins"/>
    <property type="match status" value="1"/>
</dbReference>
<gene>
    <name evidence="2" type="primary">azoR</name>
    <name type="ordered locus">YPTB2242</name>
</gene>
<protein>
    <recommendedName>
        <fullName evidence="2">FMN-dependent NADH:quinone oxidoreductase</fullName>
        <ecNumber evidence="2">1.6.5.-</ecNumber>
    </recommendedName>
    <alternativeName>
        <fullName evidence="2">Azo-dye reductase</fullName>
    </alternativeName>
    <alternativeName>
        <fullName evidence="2">FMN-dependent NADH-azo compound oxidoreductase</fullName>
    </alternativeName>
    <alternativeName>
        <fullName evidence="2">FMN-dependent NADH-azoreductase</fullName>
        <ecNumber evidence="2">1.7.1.17</ecNumber>
    </alternativeName>
</protein>
<accession>Q66A90</accession>
<feature type="initiator methionine" description="Removed" evidence="1">
    <location>
        <position position="1"/>
    </location>
</feature>
<feature type="chain" id="PRO_0000166319" description="FMN-dependent NADH:quinone oxidoreductase">
    <location>
        <begin position="2"/>
        <end position="201"/>
    </location>
</feature>
<feature type="binding site" evidence="2">
    <location>
        <position position="10"/>
    </location>
    <ligand>
        <name>FMN</name>
        <dbReference type="ChEBI" id="CHEBI:58210"/>
    </ligand>
</feature>
<feature type="binding site" evidence="2">
    <location>
        <begin position="16"/>
        <end position="18"/>
    </location>
    <ligand>
        <name>FMN</name>
        <dbReference type="ChEBI" id="CHEBI:58210"/>
    </ligand>
</feature>
<feature type="binding site" evidence="2">
    <location>
        <begin position="96"/>
        <end position="99"/>
    </location>
    <ligand>
        <name>FMN</name>
        <dbReference type="ChEBI" id="CHEBI:58210"/>
    </ligand>
</feature>
<feature type="binding site" evidence="2">
    <location>
        <begin position="140"/>
        <end position="143"/>
    </location>
    <ligand>
        <name>FMN</name>
        <dbReference type="ChEBI" id="CHEBI:58210"/>
    </ligand>
</feature>
<proteinExistence type="inferred from homology"/>
<evidence type="ECO:0000250" key="1"/>
<evidence type="ECO:0000255" key="2">
    <source>
        <dbReference type="HAMAP-Rule" id="MF_01216"/>
    </source>
</evidence>